<comment type="function">
    <text evidence="1">Bifunctional enzyme with both catalase and broad-spectrum peroxidase activity.</text>
</comment>
<comment type="catalytic activity">
    <reaction evidence="1">
        <text>H2O2 + AH2 = A + 2 H2O</text>
        <dbReference type="Rhea" id="RHEA:30275"/>
        <dbReference type="ChEBI" id="CHEBI:13193"/>
        <dbReference type="ChEBI" id="CHEBI:15377"/>
        <dbReference type="ChEBI" id="CHEBI:16240"/>
        <dbReference type="ChEBI" id="CHEBI:17499"/>
        <dbReference type="EC" id="1.11.1.21"/>
    </reaction>
</comment>
<comment type="catalytic activity">
    <reaction evidence="1">
        <text>2 H2O2 = O2 + 2 H2O</text>
        <dbReference type="Rhea" id="RHEA:20309"/>
        <dbReference type="ChEBI" id="CHEBI:15377"/>
        <dbReference type="ChEBI" id="CHEBI:15379"/>
        <dbReference type="ChEBI" id="CHEBI:16240"/>
        <dbReference type="EC" id="1.11.1.21"/>
    </reaction>
</comment>
<comment type="cofactor">
    <cofactor evidence="1">
        <name>heme b</name>
        <dbReference type="ChEBI" id="CHEBI:60344"/>
    </cofactor>
    <text evidence="1">Binds 1 heme b (iron(II)-protoporphyrin IX) group per monomer.</text>
</comment>
<comment type="subunit">
    <text evidence="1">Homodimer or homotetramer.</text>
</comment>
<comment type="subcellular location">
    <subcellularLocation>
        <location evidence="1">Cytoplasm</location>
    </subcellularLocation>
</comment>
<comment type="PTM">
    <text evidence="1">Formation of the three residue Trp-Tyr-Met cross-link is important for the catalase, but not the peroxidase activity of the enzyme.</text>
</comment>
<comment type="similarity">
    <text evidence="1">Belongs to the peroxidase family. Peroxidase/catalase subfamily.</text>
</comment>
<sequence>MSQGECPVKKVPNVAGSGTRNTDWWPNELRTNILRQHDPRQNPLGPDFNYVEEFKKLDYDALKKDLNALMTDSQDWWPADFGHYGGLFIRMAWHSAGTYRVTDGRGGGGDGQQRFAPLNAWPDNVSLDKARRLLWPIKQKYGNKISWADLMLLTGNVALESMGCPTFGFAGGRADTFQSDESVYWGGETEWLGSDVRYADGAKGVKGEGIMDGDQHKTDKSEPHTSRNLEQPLAAAHMGLIYVNPEGPEGIPDPVAAAHDIRTTFGRMAMNDAETAALIIGGHSFGKTHGAAPSENTGPDPNSEDLATQGFGWMNKHGRGNGPDTITSGLEVTWTGTPTKWSNKYLEYLYKFEWELEKSPAGANQWVAKTDEHIIPDAYDQNKKHKPRMLTTDLAMRMDPAYEKITRRWLEHPQELHDTFVRAWFKLLHRDMGPRSRWLGPEVPKEVLIWEDPVPQPEGELIGESDIATLKKQVLDAGVEPAKLIRTAWASAASFRGSDKRGGANGARIRLAPQKDWEVNNPKELAEVLKALEGVQSKFNSGSKKVSLADLIVLAGTAAVEKAAGVQVPFTPGRTDATQEQTDAKSFEHLEPVTDGFRNYGKGTDRVRTEQLDVDKAHLLRLTAPEMVVLTGGMRALNANWDGSSHGVFTKRPGQLTNDFFVNLLDNNLEWKAADSSKELYEGFDRKSGQKKWTATRHDLVFGHHPELRAVAETYAQADNTDKFVKDFVAGWEKIMNNDRFDIKNKSVSAQSRGANKPRL</sequence>
<accession>B2WH84</accession>
<reference key="1">
    <citation type="journal article" date="2013" name="G3 (Bethesda)">
        <title>Comparative genomics of a plant-pathogenic fungus, Pyrenophora tritici-repentis, reveals transduplication and the impact of repeat elements on pathogenicity and population divergence.</title>
        <authorList>
            <person name="Manning V.A."/>
            <person name="Pandelova I."/>
            <person name="Dhillon B."/>
            <person name="Wilhelm L.J."/>
            <person name="Goodwin S.B."/>
            <person name="Berlin A.M."/>
            <person name="Figueroa M."/>
            <person name="Freitag M."/>
            <person name="Hane J.K."/>
            <person name="Henrissat B."/>
            <person name="Holman W.H."/>
            <person name="Kodira C.D."/>
            <person name="Martin J."/>
            <person name="Oliver R.P."/>
            <person name="Robbertse B."/>
            <person name="Schackwitz W."/>
            <person name="Schwartz D.C."/>
            <person name="Spatafora J.W."/>
            <person name="Turgeon B.G."/>
            <person name="Yandava C."/>
            <person name="Young S."/>
            <person name="Zhou S."/>
            <person name="Zeng Q."/>
            <person name="Grigoriev I.V."/>
            <person name="Ma L.-J."/>
            <person name="Ciuffetti L.M."/>
        </authorList>
    </citation>
    <scope>NUCLEOTIDE SEQUENCE [LARGE SCALE GENOMIC DNA]</scope>
    <source>
        <strain>Pt-1C-BFP</strain>
    </source>
</reference>
<proteinExistence type="inferred from homology"/>
<gene>
    <name evidence="1" type="primary">katG</name>
    <name type="ORF">PTRG_09343</name>
</gene>
<name>KATG_PYRTR</name>
<feature type="chain" id="PRO_0000354111" description="Catalase-peroxidase">
    <location>
        <begin position="1"/>
        <end position="760"/>
    </location>
</feature>
<feature type="region of interest" description="Disordered" evidence="2">
    <location>
        <begin position="1"/>
        <end position="22"/>
    </location>
</feature>
<feature type="region of interest" description="Disordered" evidence="2">
    <location>
        <begin position="206"/>
        <end position="226"/>
    </location>
</feature>
<feature type="compositionally biased region" description="Basic and acidic residues" evidence="2">
    <location>
        <begin position="213"/>
        <end position="226"/>
    </location>
</feature>
<feature type="active site" description="Proton acceptor" evidence="1">
    <location>
        <position position="94"/>
    </location>
</feature>
<feature type="binding site" description="axial binding residue" evidence="1">
    <location>
        <position position="283"/>
    </location>
    <ligand>
        <name>heme b</name>
        <dbReference type="ChEBI" id="CHEBI:60344"/>
    </ligand>
    <ligandPart>
        <name>Fe</name>
        <dbReference type="ChEBI" id="CHEBI:18248"/>
    </ligandPart>
</feature>
<feature type="site" description="Transition state stabilizer" evidence="1">
    <location>
        <position position="90"/>
    </location>
</feature>
<feature type="cross-link" description="Tryptophyl-tyrosyl-methioninium (Trp-Tyr) (with M-268)" evidence="1">
    <location>
        <begin position="93"/>
        <end position="242"/>
    </location>
</feature>
<feature type="cross-link" description="Tryptophyl-tyrosyl-methioninium (Tyr-Met) (with W-93)" evidence="1">
    <location>
        <begin position="242"/>
        <end position="268"/>
    </location>
</feature>
<keyword id="KW-0963">Cytoplasm</keyword>
<keyword id="KW-0349">Heme</keyword>
<keyword id="KW-0376">Hydrogen peroxide</keyword>
<keyword id="KW-0408">Iron</keyword>
<keyword id="KW-0479">Metal-binding</keyword>
<keyword id="KW-0560">Oxidoreductase</keyword>
<keyword id="KW-0575">Peroxidase</keyword>
<keyword id="KW-1185">Reference proteome</keyword>
<organism>
    <name type="scientific">Pyrenophora tritici-repentis (strain Pt-1C-BFP)</name>
    <name type="common">Wheat tan spot fungus</name>
    <name type="synonym">Drechslera tritici-repentis</name>
    <dbReference type="NCBI Taxonomy" id="426418"/>
    <lineage>
        <taxon>Eukaryota</taxon>
        <taxon>Fungi</taxon>
        <taxon>Dikarya</taxon>
        <taxon>Ascomycota</taxon>
        <taxon>Pezizomycotina</taxon>
        <taxon>Dothideomycetes</taxon>
        <taxon>Pleosporomycetidae</taxon>
        <taxon>Pleosporales</taxon>
        <taxon>Pleosporineae</taxon>
        <taxon>Pleosporaceae</taxon>
        <taxon>Pyrenophora</taxon>
    </lineage>
</organism>
<protein>
    <recommendedName>
        <fullName evidence="1">Catalase-peroxidase</fullName>
        <shortName evidence="1">CP</shortName>
        <ecNumber evidence="1">1.11.1.21</ecNumber>
    </recommendedName>
    <alternativeName>
        <fullName evidence="1">Peroxidase/catalase</fullName>
    </alternativeName>
</protein>
<dbReference type="EC" id="1.11.1.21" evidence="1"/>
<dbReference type="EMBL" id="DS231625">
    <property type="protein sequence ID" value="EDU42394.1"/>
    <property type="molecule type" value="Genomic_DNA"/>
</dbReference>
<dbReference type="RefSeq" id="XP_001939675.1">
    <property type="nucleotide sequence ID" value="XM_001939640.1"/>
</dbReference>
<dbReference type="SMR" id="B2WH84"/>
<dbReference type="STRING" id="426418.B2WH84"/>
<dbReference type="EnsemblFungi" id="EDU42394">
    <property type="protein sequence ID" value="EDU42394"/>
    <property type="gene ID" value="PTRG_09343"/>
</dbReference>
<dbReference type="GeneID" id="6347633"/>
<dbReference type="KEGG" id="ptrr:6347633"/>
<dbReference type="eggNOG" id="ENOG502QTDY">
    <property type="taxonomic scope" value="Eukaryota"/>
</dbReference>
<dbReference type="HOGENOM" id="CLU_025424_2_0_1"/>
<dbReference type="InParanoid" id="B2WH84"/>
<dbReference type="OMA" id="GPETTWL"/>
<dbReference type="OrthoDB" id="3266at28556"/>
<dbReference type="Proteomes" id="UP000001471">
    <property type="component" value="Unassembled WGS sequence"/>
</dbReference>
<dbReference type="GO" id="GO:0005829">
    <property type="term" value="C:cytosol"/>
    <property type="evidence" value="ECO:0007669"/>
    <property type="project" value="TreeGrafter"/>
</dbReference>
<dbReference type="GO" id="GO:0004096">
    <property type="term" value="F:catalase activity"/>
    <property type="evidence" value="ECO:0007669"/>
    <property type="project" value="UniProtKB-UniRule"/>
</dbReference>
<dbReference type="GO" id="GO:0020037">
    <property type="term" value="F:heme binding"/>
    <property type="evidence" value="ECO:0007669"/>
    <property type="project" value="InterPro"/>
</dbReference>
<dbReference type="GO" id="GO:0046872">
    <property type="term" value="F:metal ion binding"/>
    <property type="evidence" value="ECO:0007669"/>
    <property type="project" value="UniProtKB-KW"/>
</dbReference>
<dbReference type="GO" id="GO:0070301">
    <property type="term" value="P:cellular response to hydrogen peroxide"/>
    <property type="evidence" value="ECO:0007669"/>
    <property type="project" value="TreeGrafter"/>
</dbReference>
<dbReference type="GO" id="GO:0042744">
    <property type="term" value="P:hydrogen peroxide catabolic process"/>
    <property type="evidence" value="ECO:0007669"/>
    <property type="project" value="UniProtKB-KW"/>
</dbReference>
<dbReference type="CDD" id="cd00649">
    <property type="entry name" value="catalase_peroxidase_1"/>
    <property type="match status" value="1"/>
</dbReference>
<dbReference type="CDD" id="cd08200">
    <property type="entry name" value="catalase_peroxidase_2"/>
    <property type="match status" value="1"/>
</dbReference>
<dbReference type="FunFam" id="1.10.420.10:FF:000002">
    <property type="entry name" value="Catalase-peroxidase"/>
    <property type="match status" value="1"/>
</dbReference>
<dbReference type="FunFam" id="1.10.420.10:FF:000004">
    <property type="entry name" value="Catalase-peroxidase"/>
    <property type="match status" value="1"/>
</dbReference>
<dbReference type="FunFam" id="1.10.520.10:FF:000002">
    <property type="entry name" value="Catalase-peroxidase"/>
    <property type="match status" value="1"/>
</dbReference>
<dbReference type="Gene3D" id="1.10.520.10">
    <property type="match status" value="2"/>
</dbReference>
<dbReference type="Gene3D" id="1.10.420.10">
    <property type="entry name" value="Peroxidase, domain 2"/>
    <property type="match status" value="2"/>
</dbReference>
<dbReference type="HAMAP" id="MF_01961">
    <property type="entry name" value="Catal_peroxid"/>
    <property type="match status" value="1"/>
</dbReference>
<dbReference type="InterPro" id="IPR000763">
    <property type="entry name" value="Catalase_peroxidase"/>
</dbReference>
<dbReference type="InterPro" id="IPR002016">
    <property type="entry name" value="Haem_peroxidase"/>
</dbReference>
<dbReference type="InterPro" id="IPR010255">
    <property type="entry name" value="Haem_peroxidase_sf"/>
</dbReference>
<dbReference type="InterPro" id="IPR019794">
    <property type="entry name" value="Peroxidases_AS"/>
</dbReference>
<dbReference type="InterPro" id="IPR019793">
    <property type="entry name" value="Peroxidases_heam-ligand_BS"/>
</dbReference>
<dbReference type="NCBIfam" id="TIGR00198">
    <property type="entry name" value="cat_per_HPI"/>
    <property type="match status" value="1"/>
</dbReference>
<dbReference type="NCBIfam" id="NF011635">
    <property type="entry name" value="PRK15061.1"/>
    <property type="match status" value="1"/>
</dbReference>
<dbReference type="PANTHER" id="PTHR30555:SF0">
    <property type="entry name" value="CATALASE-PEROXIDASE"/>
    <property type="match status" value="1"/>
</dbReference>
<dbReference type="PANTHER" id="PTHR30555">
    <property type="entry name" value="HYDROPEROXIDASE I, BIFUNCTIONAL CATALASE-PEROXIDASE"/>
    <property type="match status" value="1"/>
</dbReference>
<dbReference type="Pfam" id="PF00141">
    <property type="entry name" value="peroxidase"/>
    <property type="match status" value="2"/>
</dbReference>
<dbReference type="PRINTS" id="PR00460">
    <property type="entry name" value="BPEROXIDASE"/>
</dbReference>
<dbReference type="PRINTS" id="PR00458">
    <property type="entry name" value="PEROXIDASE"/>
</dbReference>
<dbReference type="SUPFAM" id="SSF48113">
    <property type="entry name" value="Heme-dependent peroxidases"/>
    <property type="match status" value="2"/>
</dbReference>
<dbReference type="PROSITE" id="PS00435">
    <property type="entry name" value="PEROXIDASE_1"/>
    <property type="match status" value="1"/>
</dbReference>
<dbReference type="PROSITE" id="PS00436">
    <property type="entry name" value="PEROXIDASE_2"/>
    <property type="match status" value="1"/>
</dbReference>
<dbReference type="PROSITE" id="PS50873">
    <property type="entry name" value="PEROXIDASE_4"/>
    <property type="match status" value="1"/>
</dbReference>
<evidence type="ECO:0000255" key="1">
    <source>
        <dbReference type="HAMAP-Rule" id="MF_03108"/>
    </source>
</evidence>
<evidence type="ECO:0000256" key="2">
    <source>
        <dbReference type="SAM" id="MobiDB-lite"/>
    </source>
</evidence>